<organism>
    <name type="scientific">Candida albicans (strain SC5314 / ATCC MYA-2876)</name>
    <name type="common">Yeast</name>
    <dbReference type="NCBI Taxonomy" id="237561"/>
    <lineage>
        <taxon>Eukaryota</taxon>
        <taxon>Fungi</taxon>
        <taxon>Dikarya</taxon>
        <taxon>Ascomycota</taxon>
        <taxon>Saccharomycotina</taxon>
        <taxon>Pichiomycetes</taxon>
        <taxon>Debaryomycetaceae</taxon>
        <taxon>Candida/Lodderomyces clade</taxon>
        <taxon>Candida</taxon>
    </lineage>
</organism>
<accession>A0A1D8PMB1</accession>
<comment type="function">
    <text evidence="4 5">Amino-acid permease that is able to transport phenylalanine (PubMed:21764911, PubMed:28028545).</text>
</comment>
<comment type="subcellular location">
    <subcellularLocation>
        <location evidence="4 5">Cell membrane</location>
        <topology evidence="1">Multi-pass membrane protein</topology>
    </subcellularLocation>
</comment>
<comment type="induction">
    <text evidence="5">Expression is under control of the CSY1 amino-acid sensor (PubMed:28028545).</text>
</comment>
<comment type="similarity">
    <text evidence="6">Belongs to the amino acid-polyamine-organocation (APC) superfamily. YAT (TC 2.A.3.10) family.</text>
</comment>
<keyword id="KW-0029">Amino-acid transport</keyword>
<keyword id="KW-1003">Cell membrane</keyword>
<keyword id="KW-0325">Glycoprotein</keyword>
<keyword id="KW-0472">Membrane</keyword>
<keyword id="KW-1185">Reference proteome</keyword>
<keyword id="KW-0812">Transmembrane</keyword>
<keyword id="KW-1133">Transmembrane helix</keyword>
<keyword id="KW-0813">Transport</keyword>
<evidence type="ECO:0000255" key="1"/>
<evidence type="ECO:0000255" key="2">
    <source>
        <dbReference type="PROSITE-ProRule" id="PRU00498"/>
    </source>
</evidence>
<evidence type="ECO:0000256" key="3">
    <source>
        <dbReference type="SAM" id="MobiDB-lite"/>
    </source>
</evidence>
<evidence type="ECO:0000269" key="4">
    <source>
    </source>
</evidence>
<evidence type="ECO:0000269" key="5">
    <source>
    </source>
</evidence>
<evidence type="ECO:0000305" key="6"/>
<name>GAP5_CANAL</name>
<sequence>MSKKYSEENTSSIPLTDLTSPSTGETSSQQQRQRASQQQPPQQPESNTATGSRWSNFVDSFKPAIENEKLAMRYRDANADVEEDAGGYYNSTDQLTEIQRININSSKSNLKRKLKNRHLQMIAIASSIGSGLLIGTGGALATGGPGGILIAWILSGISILCTIQAMAELAVTFPVSGGFNVLFSRFIDPSVGFSVAWNYVLQYLVLLPLELVAASMTIQYWNTDINPDVWVIIFYVTVTSINFFGVRLYGEVEFILSSLKVIAVVGFIILSIVLAAGGAPNGVHHGTKYWHDPGAFANGFKGVSSTFITAAFSFAGTELTGLTSAEAENPRKALPKACKQVFWRILLFYVVSIILITFLVPYDNPRLLGASDVSASPFVIAIQDGGISGLASVMNSVILISVISVGSSSVYATSRTLVSLAEQNLAPKICGYVDRAGRPLVAILITNVFGLLSFIAASGKEDEVFTWLLSISGLSSIFTWLCICISHIRFRRALHVQGRNTDELTFVSQTGVIGSWFGILLNVLVLVAEFWLAIFPLGEKSNAKSFFETYLGFVILIIFYFGHKLWRNNWILFIRSRDIDIDSGRRETDLEALKRELQEEREVLRNKPFWYRAYHFWC</sequence>
<gene>
    <name type="primary">GAP5</name>
    <name type="ordered locus">CAALFM_C405430CA</name>
</gene>
<reference key="1">
    <citation type="journal article" date="2004" name="Proc. Natl. Acad. Sci. U.S.A.">
        <title>The diploid genome sequence of Candida albicans.</title>
        <authorList>
            <person name="Jones T."/>
            <person name="Federspiel N.A."/>
            <person name="Chibana H."/>
            <person name="Dungan J."/>
            <person name="Kalman S."/>
            <person name="Magee B.B."/>
            <person name="Newport G."/>
            <person name="Thorstenson Y.R."/>
            <person name="Agabian N."/>
            <person name="Magee P.T."/>
            <person name="Davis R.W."/>
            <person name="Scherer S."/>
        </authorList>
    </citation>
    <scope>NUCLEOTIDE SEQUENCE [LARGE SCALE GENOMIC DNA]</scope>
    <source>
        <strain>SC5314 / ATCC MYA-2876</strain>
    </source>
</reference>
<reference key="2">
    <citation type="journal article" date="2007" name="Genome Biol.">
        <title>Assembly of the Candida albicans genome into sixteen supercontigs aligned on the eight chromosomes.</title>
        <authorList>
            <person name="van het Hoog M."/>
            <person name="Rast T.J."/>
            <person name="Martchenko M."/>
            <person name="Grindle S."/>
            <person name="Dignard D."/>
            <person name="Hogues H."/>
            <person name="Cuomo C."/>
            <person name="Berriman M."/>
            <person name="Scherer S."/>
            <person name="Magee B.B."/>
            <person name="Whiteway M."/>
            <person name="Chibana H."/>
            <person name="Nantel A."/>
            <person name="Magee P.T."/>
        </authorList>
    </citation>
    <scope>GENOME REANNOTATION</scope>
    <source>
        <strain>SC5314 / ATCC MYA-2876</strain>
    </source>
</reference>
<reference key="3">
    <citation type="journal article" date="2013" name="Genome Biol.">
        <title>Assembly of a phased diploid Candida albicans genome facilitates allele-specific measurements and provides a simple model for repeat and indel structure.</title>
        <authorList>
            <person name="Muzzey D."/>
            <person name="Schwartz K."/>
            <person name="Weissman J.S."/>
            <person name="Sherlock G."/>
        </authorList>
    </citation>
    <scope>NUCLEOTIDE SEQUENCE [LARGE SCALE GENOMIC DNA]</scope>
    <scope>GENOME REANNOTATION</scope>
    <source>
        <strain>SC5314 / ATCC MYA-2876</strain>
    </source>
</reference>
<reference key="4">
    <citation type="journal article" date="2011" name="Eukaryot. Cell">
        <title>The Candida albicans GAP gene family encodes permeases involved in general and specific amino acid uptake and sensing.</title>
        <authorList>
            <person name="Kraidlova L."/>
            <person name="Van Zeebroeck G."/>
            <person name="Van Dijck P."/>
            <person name="Sychrova H."/>
        </authorList>
    </citation>
    <scope>FUNCTION</scope>
    <scope>SUBCELLULAR LOCATION</scope>
</reference>
<reference key="5">
    <citation type="journal article" date="2016" name="MSphere">
        <title>Characterization of the Candida albicans amino acid permease family: Gap2 is the only general amino acid permease and Gap4 is an S-adenosylmethionine (SAM) transporter required for SAM-induced morphogenesis.</title>
        <authorList>
            <person name="Kraidlova L."/>
            <person name="Schrevens S."/>
            <person name="Tournu H."/>
            <person name="Van Zeebroeck G."/>
            <person name="Sychrova H."/>
            <person name="Van Dijck P."/>
        </authorList>
    </citation>
    <scope>FUNCTION</scope>
    <scope>INDUCTION</scope>
    <scope>SUBCELLULAR LOCATION</scope>
</reference>
<protein>
    <recommendedName>
        <fullName>Amino-acid permease GAP5</fullName>
    </recommendedName>
</protein>
<feature type="chain" id="PRO_0000439810" description="Amino-acid permease GAP5">
    <location>
        <begin position="1"/>
        <end position="618"/>
    </location>
</feature>
<feature type="transmembrane region" description="Helical" evidence="1">
    <location>
        <begin position="121"/>
        <end position="143"/>
    </location>
</feature>
<feature type="transmembrane region" description="Helical" evidence="1">
    <location>
        <begin position="148"/>
        <end position="170"/>
    </location>
</feature>
<feature type="transmembrane region" description="Helical" evidence="1">
    <location>
        <begin position="193"/>
        <end position="213"/>
    </location>
</feature>
<feature type="transmembrane region" description="Helical" evidence="1">
    <location>
        <begin position="229"/>
        <end position="249"/>
    </location>
</feature>
<feature type="transmembrane region" description="Helical" evidence="1">
    <location>
        <begin position="254"/>
        <end position="274"/>
    </location>
</feature>
<feature type="transmembrane region" description="Helical" evidence="1">
    <location>
        <begin position="302"/>
        <end position="322"/>
    </location>
</feature>
<feature type="transmembrane region" description="Helical" evidence="1">
    <location>
        <begin position="341"/>
        <end position="361"/>
    </location>
</feature>
<feature type="transmembrane region" description="Helical" evidence="1">
    <location>
        <begin position="397"/>
        <end position="419"/>
    </location>
</feature>
<feature type="transmembrane region" description="Helical" evidence="1">
    <location>
        <begin position="439"/>
        <end position="459"/>
    </location>
</feature>
<feature type="transmembrane region" description="Helical" evidence="1">
    <location>
        <begin position="465"/>
        <end position="485"/>
    </location>
</feature>
<feature type="transmembrane region" description="Helical" evidence="1">
    <location>
        <begin position="517"/>
        <end position="537"/>
    </location>
</feature>
<feature type="transmembrane region" description="Helical" evidence="1">
    <location>
        <begin position="546"/>
        <end position="566"/>
    </location>
</feature>
<feature type="region of interest" description="Disordered" evidence="3">
    <location>
        <begin position="1"/>
        <end position="55"/>
    </location>
</feature>
<feature type="compositionally biased region" description="Polar residues" evidence="3">
    <location>
        <begin position="8"/>
        <end position="26"/>
    </location>
</feature>
<feature type="compositionally biased region" description="Low complexity" evidence="3">
    <location>
        <begin position="27"/>
        <end position="40"/>
    </location>
</feature>
<feature type="compositionally biased region" description="Polar residues" evidence="3">
    <location>
        <begin position="45"/>
        <end position="55"/>
    </location>
</feature>
<feature type="glycosylation site" description="N-linked (GlcNAc...) asparagine" evidence="2">
    <location>
        <position position="9"/>
    </location>
</feature>
<feature type="glycosylation site" description="N-linked (GlcNAc...) asparagine" evidence="2">
    <location>
        <position position="90"/>
    </location>
</feature>
<feature type="glycosylation site" description="N-linked (GlcNAc...) asparagine" evidence="2">
    <location>
        <position position="104"/>
    </location>
</feature>
<proteinExistence type="evidence at transcript level"/>
<dbReference type="EMBL" id="CP017626">
    <property type="protein sequence ID" value="AOW29281.1"/>
    <property type="molecule type" value="Genomic_DNA"/>
</dbReference>
<dbReference type="RefSeq" id="XP_711447.2">
    <property type="nucleotide sequence ID" value="XM_706355.2"/>
</dbReference>
<dbReference type="SMR" id="A0A1D8PMB1"/>
<dbReference type="STRING" id="237561.A0A1D8PMB1"/>
<dbReference type="GlyCosmos" id="A0A1D8PMB1">
    <property type="glycosylation" value="3 sites, No reported glycans"/>
</dbReference>
<dbReference type="EnsemblFungi" id="C4_05430C_A-T">
    <property type="protein sequence ID" value="C4_05430C_A-T-p1"/>
    <property type="gene ID" value="C4_05430C_A"/>
</dbReference>
<dbReference type="GeneID" id="3646954"/>
<dbReference type="KEGG" id="cal:CAALFM_C405430CA"/>
<dbReference type="CGD" id="CAL0000182050">
    <property type="gene designation" value="GAP5"/>
</dbReference>
<dbReference type="VEuPathDB" id="FungiDB:C4_05430C_A"/>
<dbReference type="InParanoid" id="A0A1D8PMB1"/>
<dbReference type="OMA" id="MQPFNQV"/>
<dbReference type="OrthoDB" id="3900342at2759"/>
<dbReference type="Proteomes" id="UP000000559">
    <property type="component" value="Chromosome 4"/>
</dbReference>
<dbReference type="GO" id="GO:0016020">
    <property type="term" value="C:membrane"/>
    <property type="evidence" value="ECO:0000318"/>
    <property type="project" value="GO_Central"/>
</dbReference>
<dbReference type="GO" id="GO:0005886">
    <property type="term" value="C:plasma membrane"/>
    <property type="evidence" value="ECO:0007669"/>
    <property type="project" value="UniProtKB-SubCell"/>
</dbReference>
<dbReference type="GO" id="GO:0015171">
    <property type="term" value="F:amino acid transmembrane transporter activity"/>
    <property type="evidence" value="ECO:0000314"/>
    <property type="project" value="CGD"/>
</dbReference>
<dbReference type="GO" id="GO:0003333">
    <property type="term" value="P:amino acid transmembrane transport"/>
    <property type="evidence" value="ECO:0000315"/>
    <property type="project" value="CGD"/>
</dbReference>
<dbReference type="FunFam" id="1.20.1740.10:FF:000017">
    <property type="entry name" value="Amino acid permease"/>
    <property type="match status" value="1"/>
</dbReference>
<dbReference type="Gene3D" id="1.20.1740.10">
    <property type="entry name" value="Amino acid/polyamine transporter I"/>
    <property type="match status" value="1"/>
</dbReference>
<dbReference type="InterPro" id="IPR004841">
    <property type="entry name" value="AA-permease/SLC12A_dom"/>
</dbReference>
<dbReference type="InterPro" id="IPR004840">
    <property type="entry name" value="Amino_acid_permease_CS"/>
</dbReference>
<dbReference type="InterPro" id="IPR004762">
    <property type="entry name" value="Amino_acid_permease_fungi"/>
</dbReference>
<dbReference type="InterPro" id="IPR050524">
    <property type="entry name" value="APC_YAT"/>
</dbReference>
<dbReference type="NCBIfam" id="TIGR00913">
    <property type="entry name" value="2A0310"/>
    <property type="match status" value="1"/>
</dbReference>
<dbReference type="PANTHER" id="PTHR43341">
    <property type="entry name" value="AMINO ACID PERMEASE"/>
    <property type="match status" value="1"/>
</dbReference>
<dbReference type="PANTHER" id="PTHR43341:SF1">
    <property type="entry name" value="GENERAL AMINO-ACID PERMEASE GAP1"/>
    <property type="match status" value="1"/>
</dbReference>
<dbReference type="Pfam" id="PF00324">
    <property type="entry name" value="AA_permease"/>
    <property type="match status" value="1"/>
</dbReference>
<dbReference type="PROSITE" id="PS00218">
    <property type="entry name" value="AMINO_ACID_PERMEASE_1"/>
    <property type="match status" value="1"/>
</dbReference>